<name>NSPC_VIBCH</name>
<sequence length="387" mass="43099">METLQDIGTNMLKDELRTPYFMIDEAKLIANLEIAKHLKEISGVKMVLALKCFSTWGVFDIIKPYLDGTTSSGPFEVKLGYETFGGETHAYSVGYSEEDVKEVIDICDKMIFNSQSQLAAYRHLVEGKASLGLRINPGVSYAGQDLANPARQFSRLGVQADHIDESVFDSINGVMFHMNCENKDVDAFIGLLDAISERFGRYLDKLDWVSLGGGVFFTWPGYDVEKLGAALKAFAERHAVQLYLEPGEAIITKTTDLVVTVVDIVENGMKTAIVDSATEAHRLDTLIYKEPASVLEASDKGQHEYVIGSCSCLAGDQFCVAKFDEPLQVGQKLHILDSAGYTMVKLNWFNGLKMPSVYCERKNGQIQKINQFGYEDFKRTLSLWSIE</sequence>
<protein>
    <recommendedName>
        <fullName evidence="7 8">Carboxynorspermidine/carboxyspermidine decarboxylase</fullName>
        <shortName evidence="4">CANS DC/CAS DC</shortName>
        <shortName evidence="2 7">CANSDC/CASDC</shortName>
        <ecNumber evidence="4">4.1.1.96</ecNumber>
    </recommendedName>
</protein>
<evidence type="ECO:0000250" key="1"/>
<evidence type="ECO:0000250" key="2">
    <source>
        <dbReference type="UniProtKB" id="A8FNH9"/>
    </source>
</evidence>
<evidence type="ECO:0000250" key="3">
    <source>
        <dbReference type="UniProtKB" id="C6YCI2"/>
    </source>
</evidence>
<evidence type="ECO:0000250" key="4">
    <source>
        <dbReference type="UniProtKB" id="Q56575"/>
    </source>
</evidence>
<evidence type="ECO:0000255" key="5"/>
<evidence type="ECO:0000269" key="6">
    <source>
    </source>
</evidence>
<evidence type="ECO:0000303" key="7">
    <source>
    </source>
</evidence>
<evidence type="ECO:0000312" key="8">
    <source>
        <dbReference type="EMBL" id="AAF94776.1"/>
    </source>
</evidence>
<dbReference type="EC" id="4.1.1.96" evidence="4"/>
<dbReference type="EMBL" id="AE003852">
    <property type="protein sequence ID" value="AAF94776.1"/>
    <property type="molecule type" value="Genomic_DNA"/>
</dbReference>
<dbReference type="PIR" id="H82176">
    <property type="entry name" value="H82176"/>
</dbReference>
<dbReference type="RefSeq" id="NP_231262.1">
    <property type="nucleotide sequence ID" value="NC_002505.1"/>
</dbReference>
<dbReference type="SMR" id="Q9KRL4"/>
<dbReference type="STRING" id="243277.VC_1623"/>
<dbReference type="DNASU" id="2613879"/>
<dbReference type="EnsemblBacteria" id="AAF94776">
    <property type="protein sequence ID" value="AAF94776"/>
    <property type="gene ID" value="VC_1623"/>
</dbReference>
<dbReference type="KEGG" id="vch:VC_1623"/>
<dbReference type="PATRIC" id="fig|243277.26.peg.1550"/>
<dbReference type="eggNOG" id="COG0019">
    <property type="taxonomic scope" value="Bacteria"/>
</dbReference>
<dbReference type="HOGENOM" id="CLU_038560_0_0_6"/>
<dbReference type="BioCyc" id="MetaCyc:MONOMER-15802"/>
<dbReference type="Proteomes" id="UP000000584">
    <property type="component" value="Chromosome 1"/>
</dbReference>
<dbReference type="GO" id="GO:0005737">
    <property type="term" value="C:cytoplasm"/>
    <property type="evidence" value="ECO:0007669"/>
    <property type="project" value="UniProtKB-SubCell"/>
</dbReference>
<dbReference type="GO" id="GO:0016831">
    <property type="term" value="F:carboxy-lyase activity"/>
    <property type="evidence" value="ECO:0000250"/>
    <property type="project" value="UniProtKB"/>
</dbReference>
<dbReference type="GO" id="GO:0008836">
    <property type="term" value="F:diaminopimelate decarboxylase activity"/>
    <property type="evidence" value="ECO:0000318"/>
    <property type="project" value="GO_Central"/>
</dbReference>
<dbReference type="GO" id="GO:0042803">
    <property type="term" value="F:protein homodimerization activity"/>
    <property type="evidence" value="ECO:0000250"/>
    <property type="project" value="UniProtKB"/>
</dbReference>
<dbReference type="GO" id="GO:0030170">
    <property type="term" value="F:pyridoxal phosphate binding"/>
    <property type="evidence" value="ECO:0000250"/>
    <property type="project" value="UniProtKB"/>
</dbReference>
<dbReference type="GO" id="GO:0009089">
    <property type="term" value="P:lysine biosynthetic process via diaminopimelate"/>
    <property type="evidence" value="ECO:0000318"/>
    <property type="project" value="GO_Central"/>
</dbReference>
<dbReference type="GO" id="GO:0045312">
    <property type="term" value="P:nor-spermidine biosynthetic process"/>
    <property type="evidence" value="ECO:0000250"/>
    <property type="project" value="UniProtKB"/>
</dbReference>
<dbReference type="GO" id="GO:0044010">
    <property type="term" value="P:single-species biofilm formation"/>
    <property type="evidence" value="ECO:0000314"/>
    <property type="project" value="UniProtKB"/>
</dbReference>
<dbReference type="GO" id="GO:0008295">
    <property type="term" value="P:spermidine biosynthetic process"/>
    <property type="evidence" value="ECO:0000250"/>
    <property type="project" value="UniProtKB"/>
</dbReference>
<dbReference type="CDD" id="cd06829">
    <property type="entry name" value="PLPDE_III_CANSDC"/>
    <property type="match status" value="1"/>
</dbReference>
<dbReference type="FunFam" id="2.40.37.10:FF:000016">
    <property type="entry name" value="Carboxynorspermidine/carboxyspermidine decarboxylase"/>
    <property type="match status" value="1"/>
</dbReference>
<dbReference type="FunFam" id="3.20.20.10:FF:000012">
    <property type="entry name" value="Carboxynorspermidine/carboxyspermidine decarboxylase"/>
    <property type="match status" value="1"/>
</dbReference>
<dbReference type="Gene3D" id="3.20.20.10">
    <property type="entry name" value="Alanine racemase"/>
    <property type="match status" value="1"/>
</dbReference>
<dbReference type="Gene3D" id="2.40.37.10">
    <property type="entry name" value="Lyase, Ornithine Decarboxylase, Chain A, domain 1"/>
    <property type="match status" value="1"/>
</dbReference>
<dbReference type="InterPro" id="IPR009006">
    <property type="entry name" value="Ala_racemase/Decarboxylase_C"/>
</dbReference>
<dbReference type="InterPro" id="IPR005730">
    <property type="entry name" value="Nsp_de-COase"/>
</dbReference>
<dbReference type="InterPro" id="IPR029066">
    <property type="entry name" value="PLP-binding_barrel"/>
</dbReference>
<dbReference type="NCBIfam" id="TIGR01047">
    <property type="entry name" value="nspC"/>
    <property type="match status" value="1"/>
</dbReference>
<dbReference type="PANTHER" id="PTHR43727:SF1">
    <property type="entry name" value="CARBOXYNORSPERMIDINE_CARBOXYSPERMIDINE DECARBOXYLASE"/>
    <property type="match status" value="1"/>
</dbReference>
<dbReference type="PANTHER" id="PTHR43727">
    <property type="entry name" value="DIAMINOPIMELATE DECARBOXYLASE"/>
    <property type="match status" value="1"/>
</dbReference>
<dbReference type="PIRSF" id="PIRSF038941">
    <property type="entry name" value="NspC"/>
    <property type="match status" value="1"/>
</dbReference>
<dbReference type="SUPFAM" id="SSF50621">
    <property type="entry name" value="Alanine racemase C-terminal domain-like"/>
    <property type="match status" value="1"/>
</dbReference>
<dbReference type="SUPFAM" id="SSF51419">
    <property type="entry name" value="PLP-binding barrel"/>
    <property type="match status" value="1"/>
</dbReference>
<feature type="chain" id="PRO_0000420247" description="Carboxynorspermidine/carboxyspermidine decarboxylase">
    <location>
        <begin position="1"/>
        <end position="387"/>
    </location>
</feature>
<feature type="binding site" evidence="2">
    <location>
        <position position="248"/>
    </location>
    <ligand>
        <name>substrate</name>
    </ligand>
</feature>
<feature type="binding site" evidence="2">
    <location>
        <position position="284"/>
    </location>
    <ligand>
        <name>substrate</name>
    </ligand>
</feature>
<feature type="modified residue" description="N6-(pyridoxal phosphate)lysine" evidence="2">
    <location>
        <position position="51"/>
    </location>
</feature>
<accession>Q9KRL4</accession>
<reference key="1">
    <citation type="journal article" date="2000" name="Nature">
        <title>DNA sequence of both chromosomes of the cholera pathogen Vibrio cholerae.</title>
        <authorList>
            <person name="Heidelberg J.F."/>
            <person name="Eisen J.A."/>
            <person name="Nelson W.C."/>
            <person name="Clayton R.A."/>
            <person name="Gwinn M.L."/>
            <person name="Dodson R.J."/>
            <person name="Haft D.H."/>
            <person name="Hickey E.K."/>
            <person name="Peterson J.D."/>
            <person name="Umayam L.A."/>
            <person name="Gill S.R."/>
            <person name="Nelson K.E."/>
            <person name="Read T.D."/>
            <person name="Tettelin H."/>
            <person name="Richardson D.L."/>
            <person name="Ermolaeva M.D."/>
            <person name="Vamathevan J.J."/>
            <person name="Bass S."/>
            <person name="Qin H."/>
            <person name="Dragoi I."/>
            <person name="Sellers P."/>
            <person name="McDonald L.A."/>
            <person name="Utterback T.R."/>
            <person name="Fleischmann R.D."/>
            <person name="Nierman W.C."/>
            <person name="White O."/>
            <person name="Salzberg S.L."/>
            <person name="Smith H.O."/>
            <person name="Colwell R.R."/>
            <person name="Mekalanos J.J."/>
            <person name="Venter J.C."/>
            <person name="Fraser C.M."/>
        </authorList>
    </citation>
    <scope>NUCLEOTIDE SEQUENCE [LARGE SCALE GENOMIC DNA]</scope>
    <source>
        <strain>ATCC 39315 / El Tor Inaba N16961</strain>
    </source>
</reference>
<reference key="2">
    <citation type="journal article" date="2009" name="J. Biol. Chem.">
        <title>An alternative polyamine biosynthetic pathway is widespread in bacteria and essential for biofilm formation in Vibrio cholerae.</title>
        <authorList>
            <person name="Lee J."/>
            <person name="Sperandio V."/>
            <person name="Frantz D.E."/>
            <person name="Longgood J."/>
            <person name="Camilli A."/>
            <person name="Phillips M.A."/>
            <person name="Michael A.J."/>
        </authorList>
    </citation>
    <scope>FUNCTION</scope>
    <scope>PATHWAY</scope>
    <scope>DISRUPTION PHENOTYPE</scope>
    <source>
        <strain>El Tor C6709 / Serotype O1</strain>
    </source>
</reference>
<organism>
    <name type="scientific">Vibrio cholerae serotype O1 (strain ATCC 39315 / El Tor Inaba N16961)</name>
    <dbReference type="NCBI Taxonomy" id="243277"/>
    <lineage>
        <taxon>Bacteria</taxon>
        <taxon>Pseudomonadati</taxon>
        <taxon>Pseudomonadota</taxon>
        <taxon>Gammaproteobacteria</taxon>
        <taxon>Vibrionales</taxon>
        <taxon>Vibrionaceae</taxon>
        <taxon>Vibrio</taxon>
    </lineage>
</organism>
<proteinExistence type="inferred from homology"/>
<comment type="function">
    <text evidence="6">Catalyzes the decarboxylation of carboxynorspermidine and carboxyspermidine. Essential for biofilm formation.</text>
</comment>
<comment type="catalytic activity">
    <reaction evidence="4">
        <text>carboxynorspermidine + H(+) = norspermidine + CO2</text>
        <dbReference type="Rhea" id="RHEA:34099"/>
        <dbReference type="ChEBI" id="CHEBI:15378"/>
        <dbReference type="ChEBI" id="CHEBI:16526"/>
        <dbReference type="ChEBI" id="CHEBI:57920"/>
        <dbReference type="ChEBI" id="CHEBI:65070"/>
        <dbReference type="EC" id="4.1.1.96"/>
    </reaction>
</comment>
<comment type="catalytic activity">
    <reaction evidence="4">
        <text>carboxyspermidine + H(+) = spermidine + CO2</text>
        <dbReference type="Rhea" id="RHEA:34095"/>
        <dbReference type="ChEBI" id="CHEBI:15378"/>
        <dbReference type="ChEBI" id="CHEBI:16526"/>
        <dbReference type="ChEBI" id="CHEBI:57834"/>
        <dbReference type="ChEBI" id="CHEBI:65072"/>
        <dbReference type="EC" id="4.1.1.96"/>
    </reaction>
</comment>
<comment type="cofactor">
    <cofactor evidence="4">
        <name>pyridoxal 5'-phosphate</name>
        <dbReference type="ChEBI" id="CHEBI:597326"/>
    </cofactor>
</comment>
<comment type="subunit">
    <text evidence="2">Homodimer.</text>
</comment>
<comment type="subcellular location">
    <subcellularLocation>
        <location evidence="1">Cytoplasm</location>
    </subcellularLocation>
</comment>
<comment type="disruption phenotype">
    <text evidence="6">Abolishes sym-norspermidine and spermidine accumulation and results in substantially increased accumulation of diaminopropane, whereas putrescine levels remain unaffected. Disappearance of norspermidine and accumulation of carboxynorspermidine. 50-60% reduction in growth rate of planktonic cells and severely reduced biofilm formation, which can be rescued by exogenously supplied sym-norspermidine but not spermidine. Not required for colonizing the small intestine in infant mouse model of infection.</text>
</comment>
<comment type="similarity">
    <text evidence="5">Belongs to the Orn/Lys/Arg decarboxylase class-II family. NspC subfamily.</text>
</comment>
<keyword id="KW-0963">Cytoplasm</keyword>
<keyword id="KW-0210">Decarboxylase</keyword>
<keyword id="KW-0456">Lyase</keyword>
<keyword id="KW-0620">Polyamine biosynthesis</keyword>
<keyword id="KW-0663">Pyridoxal phosphate</keyword>
<keyword id="KW-1185">Reference proteome</keyword>
<keyword id="KW-0745">Spermidine biosynthesis</keyword>
<gene>
    <name evidence="3" type="primary">nspC</name>
    <name type="ordered locus">VC_1623</name>
</gene>